<geneLocation type="chloroplast"/>
<proteinExistence type="inferred from homology"/>
<name>RR3_SORBI</name>
<accession>A1E9W3</accession>
<protein>
    <recommendedName>
        <fullName evidence="2">Small ribosomal subunit protein uS3c</fullName>
    </recommendedName>
    <alternativeName>
        <fullName>30S ribosomal protein S3, chloroplastic</fullName>
    </alternativeName>
</protein>
<dbReference type="EMBL" id="EF115542">
    <property type="protein sequence ID" value="ABK79534.1"/>
    <property type="molecule type" value="Genomic_DNA"/>
</dbReference>
<dbReference type="RefSeq" id="YP_899446.1">
    <property type="nucleotide sequence ID" value="NC_008602.1"/>
</dbReference>
<dbReference type="SMR" id="A1E9W3"/>
<dbReference type="FunCoup" id="A1E9W3">
    <property type="interactions" value="312"/>
</dbReference>
<dbReference type="STRING" id="4558.A1E9W3"/>
<dbReference type="GeneID" id="4549090"/>
<dbReference type="KEGG" id="sbi:4549090"/>
<dbReference type="InParanoid" id="A1E9W3"/>
<dbReference type="OrthoDB" id="599002at2759"/>
<dbReference type="Proteomes" id="UP000000768">
    <property type="component" value="Chloroplast"/>
</dbReference>
<dbReference type="ExpressionAtlas" id="A1E9W3">
    <property type="expression patterns" value="baseline"/>
</dbReference>
<dbReference type="GO" id="GO:0009507">
    <property type="term" value="C:chloroplast"/>
    <property type="evidence" value="ECO:0007669"/>
    <property type="project" value="UniProtKB-SubCell"/>
</dbReference>
<dbReference type="GO" id="GO:0022627">
    <property type="term" value="C:cytosolic small ribosomal subunit"/>
    <property type="evidence" value="ECO:0000318"/>
    <property type="project" value="GO_Central"/>
</dbReference>
<dbReference type="GO" id="GO:0019843">
    <property type="term" value="F:rRNA binding"/>
    <property type="evidence" value="ECO:0007669"/>
    <property type="project" value="UniProtKB-KW"/>
</dbReference>
<dbReference type="GO" id="GO:0003735">
    <property type="term" value="F:structural constituent of ribosome"/>
    <property type="evidence" value="ECO:0000318"/>
    <property type="project" value="GO_Central"/>
</dbReference>
<dbReference type="GO" id="GO:0006412">
    <property type="term" value="P:translation"/>
    <property type="evidence" value="ECO:0007669"/>
    <property type="project" value="UniProtKB-UniRule"/>
</dbReference>
<dbReference type="CDD" id="cd02412">
    <property type="entry name" value="KH-II_30S_S3"/>
    <property type="match status" value="1"/>
</dbReference>
<dbReference type="FunFam" id="3.30.1140.32:FF:000003">
    <property type="entry name" value="30S ribosomal protein S3, chloroplastic"/>
    <property type="match status" value="1"/>
</dbReference>
<dbReference type="FunFam" id="3.30.300.20:FF:000008">
    <property type="entry name" value="30S ribosomal protein S3, chloroplastic"/>
    <property type="match status" value="1"/>
</dbReference>
<dbReference type="Gene3D" id="3.30.300.20">
    <property type="match status" value="1"/>
</dbReference>
<dbReference type="Gene3D" id="3.30.1140.32">
    <property type="entry name" value="Ribosomal protein S3, C-terminal domain"/>
    <property type="match status" value="1"/>
</dbReference>
<dbReference type="HAMAP" id="MF_01309_B">
    <property type="entry name" value="Ribosomal_uS3_B"/>
    <property type="match status" value="1"/>
</dbReference>
<dbReference type="InterPro" id="IPR015946">
    <property type="entry name" value="KH_dom-like_a/b"/>
</dbReference>
<dbReference type="InterPro" id="IPR009019">
    <property type="entry name" value="KH_sf_prok-type"/>
</dbReference>
<dbReference type="InterPro" id="IPR036419">
    <property type="entry name" value="Ribosomal_S3_C_sf"/>
</dbReference>
<dbReference type="InterPro" id="IPR005704">
    <property type="entry name" value="Ribosomal_uS3_bac-typ"/>
</dbReference>
<dbReference type="InterPro" id="IPR001351">
    <property type="entry name" value="Ribosomal_uS3_C"/>
</dbReference>
<dbReference type="InterPro" id="IPR018280">
    <property type="entry name" value="Ribosomal_uS3_CS"/>
</dbReference>
<dbReference type="NCBIfam" id="TIGR01009">
    <property type="entry name" value="rpsC_bact"/>
    <property type="match status" value="1"/>
</dbReference>
<dbReference type="PANTHER" id="PTHR11760">
    <property type="entry name" value="30S/40S RIBOSOMAL PROTEIN S3"/>
    <property type="match status" value="1"/>
</dbReference>
<dbReference type="PANTHER" id="PTHR11760:SF42">
    <property type="entry name" value="SMALL RIBOSOMAL SUBUNIT PROTEIN US3C"/>
    <property type="match status" value="1"/>
</dbReference>
<dbReference type="Pfam" id="PF00189">
    <property type="entry name" value="Ribosomal_S3_C"/>
    <property type="match status" value="1"/>
</dbReference>
<dbReference type="SUPFAM" id="SSF54814">
    <property type="entry name" value="Prokaryotic type KH domain (KH-domain type II)"/>
    <property type="match status" value="1"/>
</dbReference>
<dbReference type="SUPFAM" id="SSF54821">
    <property type="entry name" value="Ribosomal protein S3 C-terminal domain"/>
    <property type="match status" value="1"/>
</dbReference>
<dbReference type="PROSITE" id="PS00548">
    <property type="entry name" value="RIBOSOMAL_S3"/>
    <property type="match status" value="1"/>
</dbReference>
<comment type="subunit">
    <text evidence="1">Part of the 30S ribosomal subunit.</text>
</comment>
<comment type="subcellular location">
    <subcellularLocation>
        <location>Plastid</location>
        <location>Chloroplast</location>
    </subcellularLocation>
</comment>
<comment type="similarity">
    <text evidence="2">Belongs to the universal ribosomal protein uS3 family.</text>
</comment>
<feature type="chain" id="PRO_0000277000" description="Small ribosomal subunit protein uS3c">
    <location>
        <begin position="1"/>
        <end position="224"/>
    </location>
</feature>
<feature type="domain" description="KH type-2">
    <location>
        <begin position="43"/>
        <end position="124"/>
    </location>
</feature>
<evidence type="ECO:0000250" key="1"/>
<evidence type="ECO:0000305" key="2"/>
<organism>
    <name type="scientific">Sorghum bicolor</name>
    <name type="common">Sorghum</name>
    <name type="synonym">Sorghum vulgare</name>
    <dbReference type="NCBI Taxonomy" id="4558"/>
    <lineage>
        <taxon>Eukaryota</taxon>
        <taxon>Viridiplantae</taxon>
        <taxon>Streptophyta</taxon>
        <taxon>Embryophyta</taxon>
        <taxon>Tracheophyta</taxon>
        <taxon>Spermatophyta</taxon>
        <taxon>Magnoliopsida</taxon>
        <taxon>Liliopsida</taxon>
        <taxon>Poales</taxon>
        <taxon>Poaceae</taxon>
        <taxon>PACMAD clade</taxon>
        <taxon>Panicoideae</taxon>
        <taxon>Andropogonodae</taxon>
        <taxon>Andropogoneae</taxon>
        <taxon>Sorghinae</taxon>
        <taxon>Sorghum</taxon>
    </lineage>
</organism>
<sequence>MGQKINPLGFRLGTTQNHHSFWFAQPKNYSEGLQEDKKIRNCIKNYIQKNRKKGSNRKMESDSSSEVITHIEIQKEIDTIHVIIHIGFPNLLKKKGAIEELEKDLQKEVNSVNQRLNIAIEKVKEPYRQPNILAEYIAFQLKNRVSFRKAMKKAIELTKKADIKGIKIQIAGRLAGKEIARAECIKKGRLPLQTIRAKIDYCCYPIRTIYGVLGVKIWIFVEEE</sequence>
<keyword id="KW-0150">Chloroplast</keyword>
<keyword id="KW-0934">Plastid</keyword>
<keyword id="KW-1185">Reference proteome</keyword>
<keyword id="KW-0687">Ribonucleoprotein</keyword>
<keyword id="KW-0689">Ribosomal protein</keyword>
<keyword id="KW-0694">RNA-binding</keyword>
<keyword id="KW-0699">rRNA-binding</keyword>
<reference key="1">
    <citation type="journal article" date="2007" name="Theor. Appl. Genet.">
        <title>Complete chloroplast genome sequences of Hordeum vulgare, Sorghum bicolor and Agrostis stolonifera, and comparative analyses with other grass genomes.</title>
        <authorList>
            <person name="Saski C."/>
            <person name="Lee S.-B."/>
            <person name="Fjellheim S."/>
            <person name="Guda C."/>
            <person name="Jansen R.K."/>
            <person name="Luo H."/>
            <person name="Tomkins J."/>
            <person name="Rognli O.A."/>
            <person name="Daniell H."/>
            <person name="Clarke J.L."/>
        </authorList>
    </citation>
    <scope>NUCLEOTIDE SEQUENCE [LARGE SCALE GENOMIC DNA]</scope>
    <source>
        <strain>cv. BTx623</strain>
    </source>
</reference>
<gene>
    <name type="primary">rps3</name>
</gene>